<name>ARAA_SHIDS</name>
<keyword id="KW-0054">Arabinose catabolism</keyword>
<keyword id="KW-0119">Carbohydrate metabolism</keyword>
<keyword id="KW-0413">Isomerase</keyword>
<keyword id="KW-0464">Manganese</keyword>
<keyword id="KW-0479">Metal-binding</keyword>
<keyword id="KW-1185">Reference proteome</keyword>
<sequence>MTIFDNYEVWFVIGSQHLYGPETLRQVTQHAEHVVNALNTEAKLPCKLVLKPLGTTPDEITAICRDANYDDRCAGLVVWLHTFSPAKMWINGLTMLNKPLLQFHTQFNAALPWDSIDMDFMNLNQTAHGGREFSFIGARMRQQHAVVTGHWQDKQAHERIGSWMRQAVSKQDTRHLKVCRFGDNMREVAVTDGDKVAAQIKFGFSVNTWAVGDLVQVVNSISDGDVNALVDEYESCYTMTPATQIHGEKRQNVLEAARIELGMKRFLEQGGFHAFTTTFEDLHGLKQLPGLAVQRLMQQGYGFAGEGDWKTAALLRIMKVMSTGLQGGTSFMEDYTYHFEKGNDLVLGSHMLEVCPSIAAEEKPILDVQHLGIGGKDDPARLIFNTQTGPAIVASLIDLGDRYRLLVNCIDTVKTPHSLPKLPVANALWKAQPDLPTASEAWILAGGAHHTVFSHALNLNDMRQFAEMHDIEITVIDNDTRLPAFKDALRWNEVYYGFRR</sequence>
<accession>Q32K31</accession>
<protein>
    <recommendedName>
        <fullName evidence="1">L-arabinose isomerase</fullName>
        <ecNumber evidence="1">5.3.1.4</ecNumber>
    </recommendedName>
</protein>
<comment type="function">
    <text evidence="1">Catalyzes the conversion of L-arabinose to L-ribulose.</text>
</comment>
<comment type="catalytic activity">
    <reaction evidence="1">
        <text>beta-L-arabinopyranose = L-ribulose</text>
        <dbReference type="Rhea" id="RHEA:14821"/>
        <dbReference type="ChEBI" id="CHEBI:16880"/>
        <dbReference type="ChEBI" id="CHEBI:40886"/>
        <dbReference type="EC" id="5.3.1.4"/>
    </reaction>
</comment>
<comment type="cofactor">
    <cofactor evidence="1">
        <name>Mn(2+)</name>
        <dbReference type="ChEBI" id="CHEBI:29035"/>
    </cofactor>
    <text evidence="1">Binds 1 Mn(2+) ion per subunit.</text>
</comment>
<comment type="pathway">
    <text evidence="1">Carbohydrate degradation; L-arabinose degradation via L-ribulose; D-xylulose 5-phosphate from L-arabinose (bacterial route): step 1/3.</text>
</comment>
<comment type="subunit">
    <text evidence="1">Homohexamer.</text>
</comment>
<comment type="similarity">
    <text evidence="1">Belongs to the arabinose isomerase family.</text>
</comment>
<evidence type="ECO:0000255" key="1">
    <source>
        <dbReference type="HAMAP-Rule" id="MF_00519"/>
    </source>
</evidence>
<feature type="chain" id="PRO_0000259344" description="L-arabinose isomerase">
    <location>
        <begin position="1"/>
        <end position="500"/>
    </location>
</feature>
<feature type="binding site" evidence="1">
    <location>
        <position position="306"/>
    </location>
    <ligand>
        <name>Mn(2+)</name>
        <dbReference type="ChEBI" id="CHEBI:29035"/>
    </ligand>
</feature>
<feature type="binding site" evidence="1">
    <location>
        <position position="333"/>
    </location>
    <ligand>
        <name>Mn(2+)</name>
        <dbReference type="ChEBI" id="CHEBI:29035"/>
    </ligand>
</feature>
<feature type="binding site" evidence="1">
    <location>
        <position position="350"/>
    </location>
    <ligand>
        <name>Mn(2+)</name>
        <dbReference type="ChEBI" id="CHEBI:29035"/>
    </ligand>
</feature>
<feature type="binding site" evidence="1">
    <location>
        <position position="450"/>
    </location>
    <ligand>
        <name>Mn(2+)</name>
        <dbReference type="ChEBI" id="CHEBI:29035"/>
    </ligand>
</feature>
<dbReference type="EC" id="5.3.1.4" evidence="1"/>
<dbReference type="EMBL" id="CP000034">
    <property type="protein sequence ID" value="ABB60326.1"/>
    <property type="molecule type" value="Genomic_DNA"/>
</dbReference>
<dbReference type="RefSeq" id="WP_000151756.1">
    <property type="nucleotide sequence ID" value="NC_007606.1"/>
</dbReference>
<dbReference type="RefSeq" id="YP_401815.1">
    <property type="nucleotide sequence ID" value="NC_007606.1"/>
</dbReference>
<dbReference type="SMR" id="Q32K31"/>
<dbReference type="STRING" id="300267.SDY_0089"/>
<dbReference type="EnsemblBacteria" id="ABB60326">
    <property type="protein sequence ID" value="ABB60326"/>
    <property type="gene ID" value="SDY_0089"/>
</dbReference>
<dbReference type="KEGG" id="sdy:SDY_0089"/>
<dbReference type="PATRIC" id="fig|300267.13.peg.104"/>
<dbReference type="HOGENOM" id="CLU_045663_0_0_6"/>
<dbReference type="UniPathway" id="UPA00145">
    <property type="reaction ID" value="UER00565"/>
</dbReference>
<dbReference type="Proteomes" id="UP000002716">
    <property type="component" value="Chromosome"/>
</dbReference>
<dbReference type="GO" id="GO:0005829">
    <property type="term" value="C:cytosol"/>
    <property type="evidence" value="ECO:0007669"/>
    <property type="project" value="TreeGrafter"/>
</dbReference>
<dbReference type="GO" id="GO:0008733">
    <property type="term" value="F:L-arabinose isomerase activity"/>
    <property type="evidence" value="ECO:0007669"/>
    <property type="project" value="UniProtKB-UniRule"/>
</dbReference>
<dbReference type="GO" id="GO:0030145">
    <property type="term" value="F:manganese ion binding"/>
    <property type="evidence" value="ECO:0007669"/>
    <property type="project" value="UniProtKB-UniRule"/>
</dbReference>
<dbReference type="GO" id="GO:0019569">
    <property type="term" value="P:L-arabinose catabolic process to xylulose 5-phosphate"/>
    <property type="evidence" value="ECO:0007669"/>
    <property type="project" value="UniProtKB-UniRule"/>
</dbReference>
<dbReference type="CDD" id="cd03557">
    <property type="entry name" value="L-arabinose_isomerase"/>
    <property type="match status" value="1"/>
</dbReference>
<dbReference type="FunFam" id="3.40.50.10940:FF:000001">
    <property type="entry name" value="L-arabinose isomerase"/>
    <property type="match status" value="1"/>
</dbReference>
<dbReference type="Gene3D" id="3.40.50.10940">
    <property type="match status" value="1"/>
</dbReference>
<dbReference type="HAMAP" id="MF_00519">
    <property type="entry name" value="Arabinose_Isome"/>
    <property type="match status" value="1"/>
</dbReference>
<dbReference type="InterPro" id="IPR024664">
    <property type="entry name" value="Ara_Isoase_C"/>
</dbReference>
<dbReference type="InterPro" id="IPR055390">
    <property type="entry name" value="AraA_central"/>
</dbReference>
<dbReference type="InterPro" id="IPR055389">
    <property type="entry name" value="AraA_N"/>
</dbReference>
<dbReference type="InterPro" id="IPR038583">
    <property type="entry name" value="AraA_N_sf"/>
</dbReference>
<dbReference type="InterPro" id="IPR004216">
    <property type="entry name" value="Fuc/Ara_isomerase_C"/>
</dbReference>
<dbReference type="InterPro" id="IPR009015">
    <property type="entry name" value="Fucose_isomerase_N/cen_sf"/>
</dbReference>
<dbReference type="InterPro" id="IPR003762">
    <property type="entry name" value="Lara_isomerase"/>
</dbReference>
<dbReference type="NCBIfam" id="NF002795">
    <property type="entry name" value="PRK02929.1"/>
    <property type="match status" value="1"/>
</dbReference>
<dbReference type="PANTHER" id="PTHR38464">
    <property type="entry name" value="L-ARABINOSE ISOMERASE"/>
    <property type="match status" value="1"/>
</dbReference>
<dbReference type="PANTHER" id="PTHR38464:SF1">
    <property type="entry name" value="L-ARABINOSE ISOMERASE"/>
    <property type="match status" value="1"/>
</dbReference>
<dbReference type="Pfam" id="PF24856">
    <property type="entry name" value="AraA_central"/>
    <property type="match status" value="1"/>
</dbReference>
<dbReference type="Pfam" id="PF02610">
    <property type="entry name" value="AraA_N"/>
    <property type="match status" value="1"/>
</dbReference>
<dbReference type="Pfam" id="PF11762">
    <property type="entry name" value="Arabinose_Iso_C"/>
    <property type="match status" value="1"/>
</dbReference>
<dbReference type="PIRSF" id="PIRSF001478">
    <property type="entry name" value="L-ara_isomerase"/>
    <property type="match status" value="1"/>
</dbReference>
<dbReference type="SUPFAM" id="SSF50443">
    <property type="entry name" value="FucI/AraA C-terminal domain-like"/>
    <property type="match status" value="1"/>
</dbReference>
<dbReference type="SUPFAM" id="SSF53743">
    <property type="entry name" value="FucI/AraA N-terminal and middle domains"/>
    <property type="match status" value="1"/>
</dbReference>
<proteinExistence type="inferred from homology"/>
<reference key="1">
    <citation type="journal article" date="2005" name="Nucleic Acids Res.">
        <title>Genome dynamics and diversity of Shigella species, the etiologic agents of bacillary dysentery.</title>
        <authorList>
            <person name="Yang F."/>
            <person name="Yang J."/>
            <person name="Zhang X."/>
            <person name="Chen L."/>
            <person name="Jiang Y."/>
            <person name="Yan Y."/>
            <person name="Tang X."/>
            <person name="Wang J."/>
            <person name="Xiong Z."/>
            <person name="Dong J."/>
            <person name="Xue Y."/>
            <person name="Zhu Y."/>
            <person name="Xu X."/>
            <person name="Sun L."/>
            <person name="Chen S."/>
            <person name="Nie H."/>
            <person name="Peng J."/>
            <person name="Xu J."/>
            <person name="Wang Y."/>
            <person name="Yuan Z."/>
            <person name="Wen Y."/>
            <person name="Yao Z."/>
            <person name="Shen Y."/>
            <person name="Qiang B."/>
            <person name="Hou Y."/>
            <person name="Yu J."/>
            <person name="Jin Q."/>
        </authorList>
    </citation>
    <scope>NUCLEOTIDE SEQUENCE [LARGE SCALE GENOMIC DNA]</scope>
    <source>
        <strain>Sd197</strain>
    </source>
</reference>
<organism>
    <name type="scientific">Shigella dysenteriae serotype 1 (strain Sd197)</name>
    <dbReference type="NCBI Taxonomy" id="300267"/>
    <lineage>
        <taxon>Bacteria</taxon>
        <taxon>Pseudomonadati</taxon>
        <taxon>Pseudomonadota</taxon>
        <taxon>Gammaproteobacteria</taxon>
        <taxon>Enterobacterales</taxon>
        <taxon>Enterobacteriaceae</taxon>
        <taxon>Shigella</taxon>
    </lineage>
</organism>
<gene>
    <name evidence="1" type="primary">araA</name>
    <name type="ordered locus">SDY_0089</name>
</gene>